<name>YDJC_CLOB8</name>
<organism>
    <name type="scientific">Clostridium beijerinckii (strain ATCC 51743 / NCIMB 8052)</name>
    <name type="common">Clostridium acetobutylicum</name>
    <dbReference type="NCBI Taxonomy" id="290402"/>
    <lineage>
        <taxon>Bacteria</taxon>
        <taxon>Bacillati</taxon>
        <taxon>Bacillota</taxon>
        <taxon>Clostridia</taxon>
        <taxon>Eubacteriales</taxon>
        <taxon>Clostridiaceae</taxon>
        <taxon>Clostridium</taxon>
    </lineage>
</organism>
<evidence type="ECO:0000255" key="1">
    <source>
        <dbReference type="HAMAP-Rule" id="MF_01246"/>
    </source>
</evidence>
<reference key="1">
    <citation type="submission" date="2007-06" db="EMBL/GenBank/DDBJ databases">
        <title>Complete sequence of Clostridium beijerinckii NCIMB 8052.</title>
        <authorList>
            <consortium name="US DOE Joint Genome Institute"/>
            <person name="Copeland A."/>
            <person name="Lucas S."/>
            <person name="Lapidus A."/>
            <person name="Barry K."/>
            <person name="Detter J.C."/>
            <person name="Glavina del Rio T."/>
            <person name="Hammon N."/>
            <person name="Israni S."/>
            <person name="Dalin E."/>
            <person name="Tice H."/>
            <person name="Pitluck S."/>
            <person name="Sims D."/>
            <person name="Brettin T."/>
            <person name="Bruce D."/>
            <person name="Tapia R."/>
            <person name="Brainard J."/>
            <person name="Schmutz J."/>
            <person name="Larimer F."/>
            <person name="Land M."/>
            <person name="Hauser L."/>
            <person name="Kyrpides N."/>
            <person name="Mikhailova N."/>
            <person name="Bennet G."/>
            <person name="Cann I."/>
            <person name="Chen J.-S."/>
            <person name="Contreras A.L."/>
            <person name="Jones D."/>
            <person name="Kashket E."/>
            <person name="Mitchell W."/>
            <person name="Stoddard S."/>
            <person name="Schwarz W."/>
            <person name="Qureshi N."/>
            <person name="Young M."/>
            <person name="Shi Z."/>
            <person name="Ezeji T."/>
            <person name="White B."/>
            <person name="Blaschek H."/>
            <person name="Richardson P."/>
        </authorList>
    </citation>
    <scope>NUCLEOTIDE SEQUENCE [LARGE SCALE GENOMIC DNA]</scope>
    <source>
        <strain>ATCC 51743 / NCIMB 8052</strain>
    </source>
</reference>
<comment type="function">
    <text evidence="1">Probably catalyzes the deacetylation of acetylated carbohydrates an important step in the degradation of oligosaccharides.</text>
</comment>
<comment type="cofactor">
    <cofactor evidence="1">
        <name>Mg(2+)</name>
        <dbReference type="ChEBI" id="CHEBI:18420"/>
    </cofactor>
</comment>
<comment type="subunit">
    <text evidence="1">Homodimer.</text>
</comment>
<comment type="similarity">
    <text evidence="1">Belongs to the YdjC deacetylase family.</text>
</comment>
<feature type="chain" id="PRO_1000085761" description="Carbohydrate deacetylase">
    <location>
        <begin position="1"/>
        <end position="245"/>
    </location>
</feature>
<feature type="binding site" evidence="1">
    <location>
        <position position="59"/>
    </location>
    <ligand>
        <name>Mg(2+)</name>
        <dbReference type="ChEBI" id="CHEBI:18420"/>
    </ligand>
</feature>
<feature type="binding site" evidence="1">
    <location>
        <position position="121"/>
    </location>
    <ligand>
        <name>Mg(2+)</name>
        <dbReference type="ChEBI" id="CHEBI:18420"/>
    </ligand>
</feature>
<proteinExistence type="inferred from homology"/>
<protein>
    <recommendedName>
        <fullName evidence="1">Carbohydrate deacetylase</fullName>
        <ecNumber evidence="1">3.5.1.-</ecNumber>
    </recommendedName>
</protein>
<dbReference type="EC" id="3.5.1.-" evidence="1"/>
<dbReference type="EMBL" id="CP000721">
    <property type="protein sequence ID" value="ABR36147.1"/>
    <property type="molecule type" value="Genomic_DNA"/>
</dbReference>
<dbReference type="RefSeq" id="WP_012060194.1">
    <property type="nucleotide sequence ID" value="NC_009617.1"/>
</dbReference>
<dbReference type="SMR" id="A6M0L7"/>
<dbReference type="KEGG" id="cbe:Cbei_4037"/>
<dbReference type="eggNOG" id="COG3394">
    <property type="taxonomic scope" value="Bacteria"/>
</dbReference>
<dbReference type="HOGENOM" id="CLU_064244_4_0_9"/>
<dbReference type="Proteomes" id="UP000000565">
    <property type="component" value="Chromosome"/>
</dbReference>
<dbReference type="GO" id="GO:0019213">
    <property type="term" value="F:deacetylase activity"/>
    <property type="evidence" value="ECO:0007669"/>
    <property type="project" value="TreeGrafter"/>
</dbReference>
<dbReference type="GO" id="GO:0016811">
    <property type="term" value="F:hydrolase activity, acting on carbon-nitrogen (but not peptide) bonds, in linear amides"/>
    <property type="evidence" value="ECO:0007669"/>
    <property type="project" value="UniProtKB-UniRule"/>
</dbReference>
<dbReference type="GO" id="GO:0046872">
    <property type="term" value="F:metal ion binding"/>
    <property type="evidence" value="ECO:0007669"/>
    <property type="project" value="UniProtKB-KW"/>
</dbReference>
<dbReference type="GO" id="GO:0000272">
    <property type="term" value="P:polysaccharide catabolic process"/>
    <property type="evidence" value="ECO:0007669"/>
    <property type="project" value="InterPro"/>
</dbReference>
<dbReference type="CDD" id="cd10803">
    <property type="entry name" value="YdjC_EF3048_like"/>
    <property type="match status" value="1"/>
</dbReference>
<dbReference type="Gene3D" id="3.20.20.370">
    <property type="entry name" value="Glycoside hydrolase/deacetylase"/>
    <property type="match status" value="1"/>
</dbReference>
<dbReference type="HAMAP" id="MF_01246">
    <property type="entry name" value="COD"/>
    <property type="match status" value="1"/>
</dbReference>
<dbReference type="InterPro" id="IPR022948">
    <property type="entry name" value="COD_ChbG_bac"/>
</dbReference>
<dbReference type="InterPro" id="IPR011330">
    <property type="entry name" value="Glyco_hydro/deAcase_b/a-brl"/>
</dbReference>
<dbReference type="InterPro" id="IPR006879">
    <property type="entry name" value="YdjC-like"/>
</dbReference>
<dbReference type="NCBIfam" id="NF002559">
    <property type="entry name" value="PRK02134.1"/>
    <property type="match status" value="1"/>
</dbReference>
<dbReference type="PANTHER" id="PTHR31609:SF1">
    <property type="entry name" value="CARBOHYDRATE DEACETYLASE"/>
    <property type="match status" value="1"/>
</dbReference>
<dbReference type="PANTHER" id="PTHR31609">
    <property type="entry name" value="YDJC DEACETYLASE FAMILY MEMBER"/>
    <property type="match status" value="1"/>
</dbReference>
<dbReference type="Pfam" id="PF04794">
    <property type="entry name" value="YdjC"/>
    <property type="match status" value="1"/>
</dbReference>
<dbReference type="SUPFAM" id="SSF88713">
    <property type="entry name" value="Glycoside hydrolase/deacetylase"/>
    <property type="match status" value="1"/>
</dbReference>
<accession>A6M0L7</accession>
<gene>
    <name type="ordered locus">Cbei_4037</name>
</gene>
<sequence>MRLIMNADDFGISKAINLGIIEGFKNGIVTSTTLMCNMETTEHAVNLAKENSKLGVGIHLVLTAGRPLSKNVKTLVDNEGNFLKYDKMVESACIEDIRIEFRNQFEKFLSFGIVPTHIDTHHHVHSIESVFEVVAELAKEHNIPIRHIKAIGEEKYENIKTTTEFIDSFYNLSMIEPQMLINLLDDNMNVDSLEIMCHPGYLDSKILSSSSYAYPRVKELETLTNKEVIQFINEKNIELINFKDI</sequence>
<keyword id="KW-0119">Carbohydrate metabolism</keyword>
<keyword id="KW-0378">Hydrolase</keyword>
<keyword id="KW-0460">Magnesium</keyword>
<keyword id="KW-0479">Metal-binding</keyword>